<organism>
    <name type="scientific">Eremothecium gossypii (strain ATCC 10895 / CBS 109.51 / FGSC 9923 / NRRL Y-1056)</name>
    <name type="common">Yeast</name>
    <name type="synonym">Ashbya gossypii</name>
    <dbReference type="NCBI Taxonomy" id="284811"/>
    <lineage>
        <taxon>Eukaryota</taxon>
        <taxon>Fungi</taxon>
        <taxon>Dikarya</taxon>
        <taxon>Ascomycota</taxon>
        <taxon>Saccharomycotina</taxon>
        <taxon>Saccharomycetes</taxon>
        <taxon>Saccharomycetales</taxon>
        <taxon>Saccharomycetaceae</taxon>
        <taxon>Eremothecium</taxon>
    </lineage>
</organism>
<keyword id="KW-1185">Reference proteome</keyword>
<keyword id="KW-0687">Ribonucleoprotein</keyword>
<keyword id="KW-0689">Ribosomal protein</keyword>
<comment type="similarity">
    <text evidence="2">Belongs to the eukaryotic ribosomal protein eL24 family.</text>
</comment>
<sequence length="155" mass="17515">MKVEIDSFSGAKIYPGRGTLFVRGDSKVFRFHSSKSASLFHQRKNPRRIAWTVLYRRHHKKGITEEVAKKRSRKTVKAQRAVVGASLELIKERRSLKPEIRKAKRDEKAKADKEKKKADKAARKADKAKSAATQASKISKQQAKGAFQKVAATSR</sequence>
<proteinExistence type="inferred from homology"/>
<name>RL24_EREGS</name>
<gene>
    <name type="primary">RPL24</name>
    <name type="ordered locus">AFR477C</name>
</gene>
<dbReference type="EMBL" id="AE016819">
    <property type="protein sequence ID" value="AAS53848.1"/>
    <property type="molecule type" value="Genomic_DNA"/>
</dbReference>
<dbReference type="RefSeq" id="NP_986024.1">
    <property type="nucleotide sequence ID" value="NM_212160.2"/>
</dbReference>
<dbReference type="SMR" id="Q752U6"/>
<dbReference type="FunCoup" id="Q752U6">
    <property type="interactions" value="933"/>
</dbReference>
<dbReference type="STRING" id="284811.Q752U6"/>
<dbReference type="EnsemblFungi" id="AAS53848">
    <property type="protein sequence ID" value="AAS53848"/>
    <property type="gene ID" value="AGOS_AFR477C"/>
</dbReference>
<dbReference type="GeneID" id="4622303"/>
<dbReference type="KEGG" id="ago:AGOS_AFR477C"/>
<dbReference type="eggNOG" id="KOG1722">
    <property type="taxonomic scope" value="Eukaryota"/>
</dbReference>
<dbReference type="HOGENOM" id="CLU_106411_0_0_1"/>
<dbReference type="InParanoid" id="Q752U6"/>
<dbReference type="OMA" id="PGHGKKM"/>
<dbReference type="OrthoDB" id="1727108at2759"/>
<dbReference type="Proteomes" id="UP000000591">
    <property type="component" value="Chromosome VI"/>
</dbReference>
<dbReference type="GO" id="GO:0022625">
    <property type="term" value="C:cytosolic large ribosomal subunit"/>
    <property type="evidence" value="ECO:0000318"/>
    <property type="project" value="GO_Central"/>
</dbReference>
<dbReference type="GO" id="GO:0003729">
    <property type="term" value="F:mRNA binding"/>
    <property type="evidence" value="ECO:0000318"/>
    <property type="project" value="GO_Central"/>
</dbReference>
<dbReference type="GO" id="GO:0003735">
    <property type="term" value="F:structural constituent of ribosome"/>
    <property type="evidence" value="ECO:0000318"/>
    <property type="project" value="GO_Central"/>
</dbReference>
<dbReference type="GO" id="GO:0002181">
    <property type="term" value="P:cytoplasmic translation"/>
    <property type="evidence" value="ECO:0000318"/>
    <property type="project" value="GO_Central"/>
</dbReference>
<dbReference type="CDD" id="cd00472">
    <property type="entry name" value="Ribosomal_L24e_L24"/>
    <property type="match status" value="1"/>
</dbReference>
<dbReference type="FunFam" id="2.30.170.20:FF:000002">
    <property type="entry name" value="60S ribosomal protein L24"/>
    <property type="match status" value="1"/>
</dbReference>
<dbReference type="Gene3D" id="6.10.250.1270">
    <property type="match status" value="1"/>
</dbReference>
<dbReference type="Gene3D" id="2.30.170.20">
    <property type="entry name" value="Ribosomal protein L24e"/>
    <property type="match status" value="1"/>
</dbReference>
<dbReference type="InterPro" id="IPR038630">
    <property type="entry name" value="L24e/L24_sf"/>
</dbReference>
<dbReference type="InterPro" id="IPR056366">
    <property type="entry name" value="Ribosomal_eL24"/>
</dbReference>
<dbReference type="InterPro" id="IPR000988">
    <property type="entry name" value="Ribosomal_eL24-rel_N"/>
</dbReference>
<dbReference type="InterPro" id="IPR023442">
    <property type="entry name" value="Ribosomal_eL24_CS"/>
</dbReference>
<dbReference type="PANTHER" id="PTHR10792">
    <property type="entry name" value="60S RIBOSOMAL PROTEIN L24"/>
    <property type="match status" value="1"/>
</dbReference>
<dbReference type="PANTHER" id="PTHR10792:SF1">
    <property type="entry name" value="RIBOSOMAL PROTEIN L24"/>
    <property type="match status" value="1"/>
</dbReference>
<dbReference type="Pfam" id="PF01246">
    <property type="entry name" value="Ribosomal_L24e"/>
    <property type="match status" value="1"/>
</dbReference>
<dbReference type="SUPFAM" id="SSF57716">
    <property type="entry name" value="Glucocorticoid receptor-like (DNA-binding domain)"/>
    <property type="match status" value="1"/>
</dbReference>
<dbReference type="PROSITE" id="PS01073">
    <property type="entry name" value="RIBOSOMAL_L24E"/>
    <property type="match status" value="1"/>
</dbReference>
<reference key="1">
    <citation type="journal article" date="2004" name="Science">
        <title>The Ashbya gossypii genome as a tool for mapping the ancient Saccharomyces cerevisiae genome.</title>
        <authorList>
            <person name="Dietrich F.S."/>
            <person name="Voegeli S."/>
            <person name="Brachat S."/>
            <person name="Lerch A."/>
            <person name="Gates K."/>
            <person name="Steiner S."/>
            <person name="Mohr C."/>
            <person name="Poehlmann R."/>
            <person name="Luedi P."/>
            <person name="Choi S."/>
            <person name="Wing R.A."/>
            <person name="Flavier A."/>
            <person name="Gaffney T.D."/>
            <person name="Philippsen P."/>
        </authorList>
    </citation>
    <scope>NUCLEOTIDE SEQUENCE [LARGE SCALE GENOMIC DNA]</scope>
    <source>
        <strain>ATCC 10895 / CBS 109.51 / FGSC 9923 / NRRL Y-1056</strain>
    </source>
</reference>
<reference key="2">
    <citation type="journal article" date="2013" name="G3 (Bethesda)">
        <title>Genomes of Ashbya fungi isolated from insects reveal four mating-type loci, numerous translocations, lack of transposons, and distinct gene duplications.</title>
        <authorList>
            <person name="Dietrich F.S."/>
            <person name="Voegeli S."/>
            <person name="Kuo S."/>
            <person name="Philippsen P."/>
        </authorList>
    </citation>
    <scope>GENOME REANNOTATION</scope>
    <source>
        <strain>ATCC 10895 / CBS 109.51 / FGSC 9923 / NRRL Y-1056</strain>
    </source>
</reference>
<evidence type="ECO:0000256" key="1">
    <source>
        <dbReference type="SAM" id="MobiDB-lite"/>
    </source>
</evidence>
<evidence type="ECO:0000305" key="2"/>
<feature type="chain" id="PRO_0000136885" description="Large ribosomal subunit protein eL24">
    <location>
        <begin position="1"/>
        <end position="155"/>
    </location>
</feature>
<feature type="region of interest" description="Disordered" evidence="1">
    <location>
        <begin position="97"/>
        <end position="155"/>
    </location>
</feature>
<feature type="compositionally biased region" description="Basic and acidic residues" evidence="1">
    <location>
        <begin position="97"/>
        <end position="129"/>
    </location>
</feature>
<feature type="compositionally biased region" description="Polar residues" evidence="1">
    <location>
        <begin position="133"/>
        <end position="142"/>
    </location>
</feature>
<accession>Q752U6</accession>
<protein>
    <recommendedName>
        <fullName evidence="2">Large ribosomal subunit protein eL24</fullName>
    </recommendedName>
    <alternativeName>
        <fullName>60S ribosomal protein L24</fullName>
    </alternativeName>
</protein>